<feature type="chain" id="PRO_0000245274" description="Putative uncharacterized protein YOL024W">
    <location>
        <begin position="1"/>
        <end position="172"/>
    </location>
</feature>
<reference key="1">
    <citation type="journal article" date="1997" name="Nature">
        <title>The nucleotide sequence of Saccharomyces cerevisiae chromosome XV.</title>
        <authorList>
            <person name="Dujon B."/>
            <person name="Albermann K."/>
            <person name="Aldea M."/>
            <person name="Alexandraki D."/>
            <person name="Ansorge W."/>
            <person name="Arino J."/>
            <person name="Benes V."/>
            <person name="Bohn C."/>
            <person name="Bolotin-Fukuhara M."/>
            <person name="Bordonne R."/>
            <person name="Boyer J."/>
            <person name="Camasses A."/>
            <person name="Casamayor A."/>
            <person name="Casas C."/>
            <person name="Cheret G."/>
            <person name="Cziepluch C."/>
            <person name="Daignan-Fornier B."/>
            <person name="Dang V.-D."/>
            <person name="de Haan M."/>
            <person name="Delius H."/>
            <person name="Durand P."/>
            <person name="Fairhead C."/>
            <person name="Feldmann H."/>
            <person name="Gaillon L."/>
            <person name="Galisson F."/>
            <person name="Gamo F.-J."/>
            <person name="Gancedo C."/>
            <person name="Goffeau A."/>
            <person name="Goulding S.E."/>
            <person name="Grivell L.A."/>
            <person name="Habbig B."/>
            <person name="Hand N.J."/>
            <person name="Hani J."/>
            <person name="Hattenhorst U."/>
            <person name="Hebling U."/>
            <person name="Hernando Y."/>
            <person name="Herrero E."/>
            <person name="Heumann K."/>
            <person name="Hiesel R."/>
            <person name="Hilger F."/>
            <person name="Hofmann B."/>
            <person name="Hollenberg C.P."/>
            <person name="Hughes B."/>
            <person name="Jauniaux J.-C."/>
            <person name="Kalogeropoulos A."/>
            <person name="Katsoulou C."/>
            <person name="Kordes E."/>
            <person name="Lafuente M.J."/>
            <person name="Landt O."/>
            <person name="Louis E.J."/>
            <person name="Maarse A.C."/>
            <person name="Madania A."/>
            <person name="Mannhaupt G."/>
            <person name="Marck C."/>
            <person name="Martin R.P."/>
            <person name="Mewes H.-W."/>
            <person name="Michaux G."/>
            <person name="Paces V."/>
            <person name="Parle-McDermott A.G."/>
            <person name="Pearson B.M."/>
            <person name="Perrin A."/>
            <person name="Pettersson B."/>
            <person name="Poch O."/>
            <person name="Pohl T.M."/>
            <person name="Poirey R."/>
            <person name="Portetelle D."/>
            <person name="Pujol A."/>
            <person name="Purnelle B."/>
            <person name="Ramezani Rad M."/>
            <person name="Rechmann S."/>
            <person name="Schwager C."/>
            <person name="Schweizer M."/>
            <person name="Sor F."/>
            <person name="Sterky F."/>
            <person name="Tarassov I.A."/>
            <person name="Teodoru C."/>
            <person name="Tettelin H."/>
            <person name="Thierry A."/>
            <person name="Tobiasch E."/>
            <person name="Tzermia M."/>
            <person name="Uhlen M."/>
            <person name="Unseld M."/>
            <person name="Valens M."/>
            <person name="Vandenbol M."/>
            <person name="Vetter I."/>
            <person name="Vlcek C."/>
            <person name="Voet M."/>
            <person name="Volckaert G."/>
            <person name="Voss H."/>
            <person name="Wambutt R."/>
            <person name="Wedler H."/>
            <person name="Wiemann S."/>
            <person name="Winsor B."/>
            <person name="Wolfe K.H."/>
            <person name="Zollner A."/>
            <person name="Zumstein E."/>
            <person name="Kleine K."/>
        </authorList>
    </citation>
    <scope>NUCLEOTIDE SEQUENCE [LARGE SCALE GENOMIC DNA]</scope>
    <source>
        <strain>ATCC 204508 / S288c</strain>
    </source>
</reference>
<reference key="2">
    <citation type="journal article" date="2014" name="G3 (Bethesda)">
        <title>The reference genome sequence of Saccharomyces cerevisiae: Then and now.</title>
        <authorList>
            <person name="Engel S.R."/>
            <person name="Dietrich F.S."/>
            <person name="Fisk D.G."/>
            <person name="Binkley G."/>
            <person name="Balakrishnan R."/>
            <person name="Costanzo M.C."/>
            <person name="Dwight S.S."/>
            <person name="Hitz B.C."/>
            <person name="Karra K."/>
            <person name="Nash R.S."/>
            <person name="Weng S."/>
            <person name="Wong E.D."/>
            <person name="Lloyd P."/>
            <person name="Skrzypek M.S."/>
            <person name="Miyasato S.R."/>
            <person name="Simison M."/>
            <person name="Cherry J.M."/>
        </authorList>
    </citation>
    <scope>GENOME REANNOTATION</scope>
    <source>
        <strain>ATCC 204508 / S288c</strain>
    </source>
</reference>
<reference key="3">
    <citation type="journal article" date="2007" name="Genome Res.">
        <title>Approaching a complete repository of sequence-verified protein-encoding clones for Saccharomyces cerevisiae.</title>
        <authorList>
            <person name="Hu Y."/>
            <person name="Rolfs A."/>
            <person name="Bhullar B."/>
            <person name="Murthy T.V.S."/>
            <person name="Zhu C."/>
            <person name="Berger M.F."/>
            <person name="Camargo A.A."/>
            <person name="Kelley F."/>
            <person name="McCarron S."/>
            <person name="Jepson D."/>
            <person name="Richardson A."/>
            <person name="Raphael J."/>
            <person name="Moreira D."/>
            <person name="Taycher E."/>
            <person name="Zuo D."/>
            <person name="Mohr S."/>
            <person name="Kane M.F."/>
            <person name="Williamson J."/>
            <person name="Simpson A.J.G."/>
            <person name="Bulyk M.L."/>
            <person name="Harlow E."/>
            <person name="Marsischky G."/>
            <person name="Kolodner R.D."/>
            <person name="LaBaer J."/>
        </authorList>
    </citation>
    <scope>NUCLEOTIDE SEQUENCE [GENOMIC DNA]</scope>
    <source>
        <strain>ATCC 204508 / S288c</strain>
    </source>
</reference>
<dbReference type="EMBL" id="Z74766">
    <property type="protein sequence ID" value="CAA99024.1"/>
    <property type="molecule type" value="Genomic_DNA"/>
</dbReference>
<dbReference type="EMBL" id="AY558005">
    <property type="protein sequence ID" value="AAS56331.1"/>
    <property type="molecule type" value="Genomic_DNA"/>
</dbReference>
<dbReference type="EMBL" id="BK006948">
    <property type="protein sequence ID" value="DAA10757.1"/>
    <property type="molecule type" value="Genomic_DNA"/>
</dbReference>
<dbReference type="PIR" id="S66707">
    <property type="entry name" value="S66707"/>
</dbReference>
<dbReference type="RefSeq" id="NP_014618.1">
    <property type="nucleotide sequence ID" value="NM_001183278.1"/>
</dbReference>
<dbReference type="BioGRID" id="34377">
    <property type="interactions" value="41"/>
</dbReference>
<dbReference type="FunCoup" id="Q08172">
    <property type="interactions" value="38"/>
</dbReference>
<dbReference type="IntAct" id="Q08172">
    <property type="interactions" value="2"/>
</dbReference>
<dbReference type="MINT" id="Q08172"/>
<dbReference type="STRING" id="4932.YOL024W"/>
<dbReference type="PaxDb" id="4932-YOL024W"/>
<dbReference type="EnsemblFungi" id="YOL024W_mRNA">
    <property type="protein sequence ID" value="YOL024W"/>
    <property type="gene ID" value="YOL024W"/>
</dbReference>
<dbReference type="GeneID" id="854134"/>
<dbReference type="KEGG" id="sce:YOL024W"/>
<dbReference type="AGR" id="SGD:S000005384"/>
<dbReference type="SGD" id="S000005384">
    <property type="gene designation" value="YOL024W"/>
</dbReference>
<dbReference type="VEuPathDB" id="FungiDB:YOL024W"/>
<dbReference type="HOGENOM" id="CLU_132817_0_0_1"/>
<dbReference type="InParanoid" id="Q08172"/>
<dbReference type="OrthoDB" id="4037868at2759"/>
<dbReference type="BioCyc" id="YEAST:G3O-33440-MONOMER"/>
<dbReference type="BioGRID-ORCS" id="854134">
    <property type="hits" value="0 hits in 10 CRISPR screens"/>
</dbReference>
<dbReference type="PRO" id="PR:Q08172"/>
<dbReference type="Proteomes" id="UP000002311">
    <property type="component" value="Chromosome XV"/>
</dbReference>
<dbReference type="RNAct" id="Q08172">
    <property type="molecule type" value="protein"/>
</dbReference>
<protein>
    <recommendedName>
        <fullName>Putative uncharacterized protein YOL024W</fullName>
    </recommendedName>
</protein>
<sequence length="172" mass="20110">MSKLSSYPHAADFINMEEPPKSKEFFDDLCAVPNLLKRRFPNSRRSTHYCEALNYSRKKLPVVLSKMTLQELRHNMSTFFLQEKDQINIYDTCKVIDMGDRVLLETMPPQPRDLFEKLHASKTNLVVQTAALDEPLLTVKAELQSSSFPQKSSLFLYEDYKKFIYQQLDMFS</sequence>
<organism>
    <name type="scientific">Saccharomyces cerevisiae (strain ATCC 204508 / S288c)</name>
    <name type="common">Baker's yeast</name>
    <dbReference type="NCBI Taxonomy" id="559292"/>
    <lineage>
        <taxon>Eukaryota</taxon>
        <taxon>Fungi</taxon>
        <taxon>Dikarya</taxon>
        <taxon>Ascomycota</taxon>
        <taxon>Saccharomycotina</taxon>
        <taxon>Saccharomycetes</taxon>
        <taxon>Saccharomycetales</taxon>
        <taxon>Saccharomycetaceae</taxon>
        <taxon>Saccharomyces</taxon>
    </lineage>
</organism>
<name>YO024_YEAST</name>
<keyword id="KW-1185">Reference proteome</keyword>
<proteinExistence type="predicted"/>
<gene>
    <name type="ordered locus">YOL024W</name>
</gene>
<accession>Q08172</accession>
<accession>D6W241</accession>